<organism>
    <name type="scientific">Escherichia coli (strain K12)</name>
    <dbReference type="NCBI Taxonomy" id="83333"/>
    <lineage>
        <taxon>Bacteria</taxon>
        <taxon>Pseudomonadati</taxon>
        <taxon>Pseudomonadota</taxon>
        <taxon>Gammaproteobacteria</taxon>
        <taxon>Enterobacterales</taxon>
        <taxon>Enterobacteriaceae</taxon>
        <taxon>Escherichia</taxon>
    </lineage>
</organism>
<protein>
    <recommendedName>
        <fullName evidence="1">Transcription antitermination protein RfaH</fullName>
    </recommendedName>
</protein>
<evidence type="ECO:0000255" key="1">
    <source>
        <dbReference type="HAMAP-Rule" id="MF_00951"/>
    </source>
</evidence>
<evidence type="ECO:0000269" key="2">
    <source>
    </source>
</evidence>
<evidence type="ECO:0000269" key="3">
    <source>
    </source>
</evidence>
<evidence type="ECO:0000269" key="4">
    <source>
    </source>
</evidence>
<evidence type="ECO:0000269" key="5">
    <source>
    </source>
</evidence>
<evidence type="ECO:0000269" key="6">
    <source>
    </source>
</evidence>
<evidence type="ECO:0000269" key="7">
    <source>
    </source>
</evidence>
<evidence type="ECO:0000269" key="8">
    <source>
    </source>
</evidence>
<evidence type="ECO:0000269" key="9">
    <source>
    </source>
</evidence>
<evidence type="ECO:0000269" key="10">
    <source>
    </source>
</evidence>
<evidence type="ECO:0000269" key="11">
    <source>
    </source>
</evidence>
<evidence type="ECO:0007829" key="12">
    <source>
        <dbReference type="PDB" id="2LCL"/>
    </source>
</evidence>
<evidence type="ECO:0007829" key="13">
    <source>
        <dbReference type="PDB" id="2OUG"/>
    </source>
</evidence>
<dbReference type="EMBL" id="X65013">
    <property type="protein sequence ID" value="CAA46147.1"/>
    <property type="molecule type" value="Genomic_DNA"/>
</dbReference>
<dbReference type="EMBL" id="M87049">
    <property type="protein sequence ID" value="AAA67638.1"/>
    <property type="molecule type" value="Genomic_DNA"/>
</dbReference>
<dbReference type="EMBL" id="M94889">
    <property type="protein sequence ID" value="AAA91060.1"/>
    <property type="molecule type" value="Genomic_DNA"/>
</dbReference>
<dbReference type="EMBL" id="U00096">
    <property type="protein sequence ID" value="AAC76845.1"/>
    <property type="molecule type" value="Genomic_DNA"/>
</dbReference>
<dbReference type="EMBL" id="AP009048">
    <property type="protein sequence ID" value="BAE77461.1"/>
    <property type="molecule type" value="Genomic_DNA"/>
</dbReference>
<dbReference type="PIR" id="S30732">
    <property type="entry name" value="S30732"/>
</dbReference>
<dbReference type="RefSeq" id="NP_418284.1">
    <property type="nucleotide sequence ID" value="NC_000913.3"/>
</dbReference>
<dbReference type="RefSeq" id="WP_001192396.1">
    <property type="nucleotide sequence ID" value="NZ_STEB01000021.1"/>
</dbReference>
<dbReference type="PDB" id="2LCL">
    <property type="method" value="NMR"/>
    <property type="chains" value="A=101-162"/>
</dbReference>
<dbReference type="PDB" id="2OUG">
    <property type="method" value="X-ray"/>
    <property type="resolution" value="2.10 A"/>
    <property type="chains" value="A/B/C/D=1-162"/>
</dbReference>
<dbReference type="PDB" id="5OND">
    <property type="method" value="X-ray"/>
    <property type="resolution" value="2.10 A"/>
    <property type="chains" value="A/B=1-162"/>
</dbReference>
<dbReference type="PDB" id="6C6S">
    <property type="method" value="EM"/>
    <property type="resolution" value="3.70 A"/>
    <property type="chains" value="D=1-162"/>
</dbReference>
<dbReference type="PDB" id="6C6T">
    <property type="method" value="EM"/>
    <property type="resolution" value="3.50 A"/>
    <property type="chains" value="D=1-162"/>
</dbReference>
<dbReference type="PDB" id="8PEN">
    <property type="method" value="EM"/>
    <property type="resolution" value="3.10 A"/>
    <property type="chains" value="P=1-162"/>
</dbReference>
<dbReference type="PDB" id="8PFG">
    <property type="method" value="EM"/>
    <property type="resolution" value="3.10 A"/>
    <property type="chains" value="P=1-162"/>
</dbReference>
<dbReference type="PDB" id="8PFJ">
    <property type="method" value="EM"/>
    <property type="resolution" value="3.40 A"/>
    <property type="chains" value="P=1-162"/>
</dbReference>
<dbReference type="PDB" id="8PHK">
    <property type="method" value="EM"/>
    <property type="resolution" value="3.10 A"/>
    <property type="chains" value="P=1-162"/>
</dbReference>
<dbReference type="PDB" id="8PIB">
    <property type="method" value="EM"/>
    <property type="resolution" value="2.60 A"/>
    <property type="chains" value="P=1-162"/>
</dbReference>
<dbReference type="PDB" id="8PID">
    <property type="method" value="EM"/>
    <property type="resolution" value="3.00 A"/>
    <property type="chains" value="P=1-162"/>
</dbReference>
<dbReference type="PDB" id="8PIL">
    <property type="method" value="EM"/>
    <property type="resolution" value="3.20 A"/>
    <property type="chains" value="P=1-162"/>
</dbReference>
<dbReference type="PDB" id="8PIM">
    <property type="method" value="EM"/>
    <property type="resolution" value="3.40 A"/>
    <property type="chains" value="P=1-162"/>
</dbReference>
<dbReference type="PDB" id="8UPO">
    <property type="method" value="EM"/>
    <property type="resolution" value="5.50 A"/>
    <property type="chains" value="AB=1-162"/>
</dbReference>
<dbReference type="PDB" id="8UPR">
    <property type="method" value="EM"/>
    <property type="resolution" value="5.30 A"/>
    <property type="chains" value="AB=1-162"/>
</dbReference>
<dbReference type="PDB" id="8UQL">
    <property type="method" value="EM"/>
    <property type="resolution" value="3.20 A"/>
    <property type="chains" value="AB=1-162"/>
</dbReference>
<dbReference type="PDB" id="8UQM">
    <property type="method" value="EM"/>
    <property type="resolution" value="5.30 A"/>
    <property type="chains" value="AB=1-162"/>
</dbReference>
<dbReference type="PDB" id="8UQP">
    <property type="method" value="EM"/>
    <property type="resolution" value="3.80 A"/>
    <property type="chains" value="AB=1-162"/>
</dbReference>
<dbReference type="PDB" id="8UR0">
    <property type="method" value="EM"/>
    <property type="resolution" value="3.40 A"/>
    <property type="chains" value="AB=1-162"/>
</dbReference>
<dbReference type="PDB" id="8URH">
    <property type="method" value="EM"/>
    <property type="resolution" value="5.70 A"/>
    <property type="chains" value="AB=1-162"/>
</dbReference>
<dbReference type="PDB" id="8URI">
    <property type="method" value="EM"/>
    <property type="resolution" value="5.30 A"/>
    <property type="chains" value="AB=1-162"/>
</dbReference>
<dbReference type="PDB" id="8URX">
    <property type="method" value="EM"/>
    <property type="resolution" value="6.60 A"/>
    <property type="chains" value="AB=1-162"/>
</dbReference>
<dbReference type="PDB" id="8URY">
    <property type="method" value="EM"/>
    <property type="resolution" value="3.10 A"/>
    <property type="chains" value="AB=1-162"/>
</dbReference>
<dbReference type="PDBsum" id="2LCL"/>
<dbReference type="PDBsum" id="2OUG"/>
<dbReference type="PDBsum" id="5OND"/>
<dbReference type="PDBsum" id="6C6S"/>
<dbReference type="PDBsum" id="6C6T"/>
<dbReference type="PDBsum" id="8PEN"/>
<dbReference type="PDBsum" id="8PFG"/>
<dbReference type="PDBsum" id="8PFJ"/>
<dbReference type="PDBsum" id="8PHK"/>
<dbReference type="PDBsum" id="8PIB"/>
<dbReference type="PDBsum" id="8PID"/>
<dbReference type="PDBsum" id="8PIL"/>
<dbReference type="PDBsum" id="8PIM"/>
<dbReference type="PDBsum" id="8UPO"/>
<dbReference type="PDBsum" id="8UPR"/>
<dbReference type="PDBsum" id="8UQL"/>
<dbReference type="PDBsum" id="8UQM"/>
<dbReference type="PDBsum" id="8UQP"/>
<dbReference type="PDBsum" id="8UR0"/>
<dbReference type="PDBsum" id="8URH"/>
<dbReference type="PDBsum" id="8URI"/>
<dbReference type="PDBsum" id="8URX"/>
<dbReference type="PDBsum" id="8URY"/>
<dbReference type="BMRB" id="P0AFW0"/>
<dbReference type="EMDB" id="EMD-17632"/>
<dbReference type="EMDB" id="EMD-17646"/>
<dbReference type="EMDB" id="EMD-17647"/>
<dbReference type="EMDB" id="EMD-17668"/>
<dbReference type="EMDB" id="EMD-17679"/>
<dbReference type="EMDB" id="EMD-17681"/>
<dbReference type="EMDB" id="EMD-17685"/>
<dbReference type="EMDB" id="EMD-17686"/>
<dbReference type="EMDB" id="EMD-7349"/>
<dbReference type="EMDB" id="EMD-7350"/>
<dbReference type="SMR" id="P0AFW0"/>
<dbReference type="BioGRID" id="4263465">
    <property type="interactions" value="8"/>
</dbReference>
<dbReference type="FunCoup" id="P0AFW0">
    <property type="interactions" value="31"/>
</dbReference>
<dbReference type="IntAct" id="P0AFW0">
    <property type="interactions" value="7"/>
</dbReference>
<dbReference type="STRING" id="511145.b3842"/>
<dbReference type="MoonProt" id="P0AFW0"/>
<dbReference type="jPOST" id="P0AFW0"/>
<dbReference type="PaxDb" id="511145-b3842"/>
<dbReference type="EnsemblBacteria" id="AAC76845">
    <property type="protein sequence ID" value="AAC76845"/>
    <property type="gene ID" value="b3842"/>
</dbReference>
<dbReference type="GeneID" id="86948508"/>
<dbReference type="GeneID" id="948327"/>
<dbReference type="KEGG" id="ecj:JW3818"/>
<dbReference type="KEGG" id="eco:b3842"/>
<dbReference type="KEGG" id="ecoc:C3026_20775"/>
<dbReference type="PATRIC" id="fig|1411691.4.peg.2868"/>
<dbReference type="EchoBASE" id="EB0832"/>
<dbReference type="eggNOG" id="COG0250">
    <property type="taxonomic scope" value="Bacteria"/>
</dbReference>
<dbReference type="HOGENOM" id="CLU_067287_5_0_6"/>
<dbReference type="InParanoid" id="P0AFW0"/>
<dbReference type="OMA" id="AVYVRSR"/>
<dbReference type="OrthoDB" id="9790639at2"/>
<dbReference type="PhylomeDB" id="P0AFW0"/>
<dbReference type="BioCyc" id="EcoCyc:EG10839-MONOMER"/>
<dbReference type="EvolutionaryTrace" id="P0AFW0"/>
<dbReference type="PRO" id="PR:P0AFW0"/>
<dbReference type="Proteomes" id="UP000000625">
    <property type="component" value="Chromosome"/>
</dbReference>
<dbReference type="GO" id="GO:0005829">
    <property type="term" value="C:cytosol"/>
    <property type="evidence" value="ECO:0000318"/>
    <property type="project" value="GO_Central"/>
</dbReference>
<dbReference type="GO" id="GO:0001000">
    <property type="term" value="F:bacterial-type RNA polymerase core enzyme binding"/>
    <property type="evidence" value="ECO:0000314"/>
    <property type="project" value="EcoCyc"/>
</dbReference>
<dbReference type="GO" id="GO:0003677">
    <property type="term" value="F:DNA binding"/>
    <property type="evidence" value="ECO:0007669"/>
    <property type="project" value="UniProtKB-UniRule"/>
</dbReference>
<dbReference type="GO" id="GO:0061980">
    <property type="term" value="F:regulatory RNA binding"/>
    <property type="evidence" value="ECO:0000314"/>
    <property type="project" value="EcoCyc"/>
</dbReference>
<dbReference type="GO" id="GO:0001073">
    <property type="term" value="F:transcription antitermination factor activity, DNA binding"/>
    <property type="evidence" value="ECO:0000314"/>
    <property type="project" value="EcoCyc"/>
</dbReference>
<dbReference type="GO" id="GO:0008494">
    <property type="term" value="F:translation activator activity"/>
    <property type="evidence" value="ECO:0000315"/>
    <property type="project" value="EcoCyc"/>
</dbReference>
<dbReference type="GO" id="GO:0006354">
    <property type="term" value="P:DNA-templated transcription elongation"/>
    <property type="evidence" value="ECO:0000314"/>
    <property type="project" value="EcoCyc"/>
</dbReference>
<dbReference type="GO" id="GO:0045727">
    <property type="term" value="P:positive regulation of translation"/>
    <property type="evidence" value="ECO:0000315"/>
    <property type="project" value="EcoCyc"/>
</dbReference>
<dbReference type="GO" id="GO:0031564">
    <property type="term" value="P:transcription antitermination"/>
    <property type="evidence" value="ECO:0000314"/>
    <property type="project" value="EcoCyc"/>
</dbReference>
<dbReference type="GO" id="GO:0140673">
    <property type="term" value="P:transcription elongation-coupled chromatin remodeling"/>
    <property type="evidence" value="ECO:0007669"/>
    <property type="project" value="InterPro"/>
</dbReference>
<dbReference type="CDD" id="cd09892">
    <property type="entry name" value="NGN_SP_RfaH"/>
    <property type="match status" value="1"/>
</dbReference>
<dbReference type="FunFam" id="3.30.70.940:FF:000004">
    <property type="entry name" value="Transcription antitermination protein RfaH"/>
    <property type="match status" value="1"/>
</dbReference>
<dbReference type="Gene3D" id="3.30.70.940">
    <property type="entry name" value="NusG, N-terminal domain"/>
    <property type="match status" value="1"/>
</dbReference>
<dbReference type="HAMAP" id="MF_00951">
    <property type="entry name" value="RfaH"/>
    <property type="match status" value="1"/>
</dbReference>
<dbReference type="InterPro" id="IPR006645">
    <property type="entry name" value="NGN-like_dom"/>
</dbReference>
<dbReference type="InterPro" id="IPR036735">
    <property type="entry name" value="NGN_dom_sf"/>
</dbReference>
<dbReference type="InterPro" id="IPR043425">
    <property type="entry name" value="NusG-like"/>
</dbReference>
<dbReference type="InterPro" id="IPR010215">
    <property type="entry name" value="Transcription_antiterm_RfaH"/>
</dbReference>
<dbReference type="NCBIfam" id="NF006534">
    <property type="entry name" value="PRK09014.1"/>
    <property type="match status" value="1"/>
</dbReference>
<dbReference type="NCBIfam" id="TIGR01955">
    <property type="entry name" value="RfaH"/>
    <property type="match status" value="1"/>
</dbReference>
<dbReference type="PANTHER" id="PTHR30265">
    <property type="entry name" value="RHO-INTERACTING TRANSCRIPTION TERMINATION FACTOR NUSG"/>
    <property type="match status" value="1"/>
</dbReference>
<dbReference type="PANTHER" id="PTHR30265:SF7">
    <property type="entry name" value="TRANSCRIPTION ANTITERMINATION PROTEIN RFAH"/>
    <property type="match status" value="1"/>
</dbReference>
<dbReference type="Pfam" id="PF02357">
    <property type="entry name" value="NusG"/>
    <property type="match status" value="1"/>
</dbReference>
<dbReference type="SMART" id="SM00738">
    <property type="entry name" value="NGN"/>
    <property type="match status" value="1"/>
</dbReference>
<dbReference type="SUPFAM" id="SSF82679">
    <property type="entry name" value="N-utilization substance G protein NusG, N-terminal domain"/>
    <property type="match status" value="1"/>
</dbReference>
<accession>P0AFW0</accession>
<accession>P26614</accession>
<accession>Q2M8E5</accession>
<reference key="1">
    <citation type="journal article" date="1992" name="Mol. Microbiol.">
        <title>Escherichia coli HlyT protein, a transcriptional activator of haemolysin synthesis and secretion, is encoded by the rfaH (sfrB) locus required for expression of sex factor and lipopolysaccharide genes.</title>
        <authorList>
            <person name="Bailey M.J.A."/>
            <person name="Koronakis V."/>
            <person name="Schmoll T."/>
            <person name="Hughes C."/>
        </authorList>
    </citation>
    <scope>NUCLEOTIDE SEQUENCE [GENOMIC DNA]</scope>
    <scope>FUNCTION</scope>
    <source>
        <strain>5KC</strain>
    </source>
</reference>
<reference key="2">
    <citation type="submission" date="1996-03" db="EMBL/GenBank/DDBJ databases">
        <authorList>
            <person name="Missiakas D."/>
            <person name="Georgopoulos C."/>
            <person name="Raina S."/>
        </authorList>
    </citation>
    <scope>NUCLEOTIDE SEQUENCE [GENOMIC DNA]</scope>
    <source>
        <strain>K12</strain>
    </source>
</reference>
<reference key="3">
    <citation type="journal article" date="1992" name="Science">
        <title>Analysis of the Escherichia coli genome: DNA sequence of the region from 84.5 to 86.5 minutes.</title>
        <authorList>
            <person name="Daniels D.L."/>
            <person name="Plunkett G. III"/>
            <person name="Burland V.D."/>
            <person name="Blattner F.R."/>
        </authorList>
    </citation>
    <scope>NUCLEOTIDE SEQUENCE [LARGE SCALE GENOMIC DNA]</scope>
    <source>
        <strain>K12 / MG1655 / ATCC 47076</strain>
    </source>
</reference>
<reference key="4">
    <citation type="journal article" date="1997" name="Science">
        <title>The complete genome sequence of Escherichia coli K-12.</title>
        <authorList>
            <person name="Blattner F.R."/>
            <person name="Plunkett G. III"/>
            <person name="Bloch C.A."/>
            <person name="Perna N.T."/>
            <person name="Burland V."/>
            <person name="Riley M."/>
            <person name="Collado-Vides J."/>
            <person name="Glasner J.D."/>
            <person name="Rode C.K."/>
            <person name="Mayhew G.F."/>
            <person name="Gregor J."/>
            <person name="Davis N.W."/>
            <person name="Kirkpatrick H.A."/>
            <person name="Goeden M.A."/>
            <person name="Rose D.J."/>
            <person name="Mau B."/>
            <person name="Shao Y."/>
        </authorList>
    </citation>
    <scope>NUCLEOTIDE SEQUENCE [LARGE SCALE GENOMIC DNA]</scope>
    <source>
        <strain>K12 / MG1655 / ATCC 47076</strain>
    </source>
</reference>
<reference key="5">
    <citation type="journal article" date="2006" name="Mol. Syst. Biol.">
        <title>Highly accurate genome sequences of Escherichia coli K-12 strains MG1655 and W3110.</title>
        <authorList>
            <person name="Hayashi K."/>
            <person name="Morooka N."/>
            <person name="Yamamoto Y."/>
            <person name="Fujita K."/>
            <person name="Isono K."/>
            <person name="Choi S."/>
            <person name="Ohtsubo E."/>
            <person name="Baba T."/>
            <person name="Wanner B.L."/>
            <person name="Mori H."/>
            <person name="Horiuchi T."/>
        </authorList>
    </citation>
    <scope>NUCLEOTIDE SEQUENCE [LARGE SCALE GENOMIC DNA]</scope>
    <source>
        <strain>K12 / W3110 / ATCC 27325 / DSM 5911</strain>
    </source>
</reference>
<reference key="6">
    <citation type="journal article" date="1996" name="J. Bacteriol.">
        <title>RfaH enhances elongation of Escherichia coli hlyCABD mRNA.</title>
        <authorList>
            <person name="Leeds J.A."/>
            <person name="Welch R.A."/>
        </authorList>
    </citation>
    <scope>FUNCTION IN HEMOLYSIN TRANSCRIPTION</scope>
    <source>
        <strain>5KC</strain>
    </source>
</reference>
<reference key="7">
    <citation type="journal article" date="1996" name="Mol. Microbiol.">
        <title>Increased distal gene transcription by the elongation factor RfaH, a specialized homologue of NusG.</title>
        <authorList>
            <person name="Bailey M.J."/>
            <person name="Hughes C."/>
            <person name="Koronakis V."/>
        </authorList>
    </citation>
    <scope>FUNCTION</scope>
</reference>
<reference key="8">
    <citation type="journal article" date="1997" name="J. Bacteriol.">
        <title>Enhancing transcription through the Escherichia coli hemolysin operon, hlyCABD: RfaH and upstream JUMPStart DNA sequences function together via a postinitiation mechanism.</title>
        <authorList>
            <person name="Leeds J.A."/>
            <person name="Welch R.A."/>
        </authorList>
    </citation>
    <scope>FUNCTION</scope>
</reference>
<reference key="9">
    <citation type="journal article" date="1997" name="Mol. Microbiol.">
        <title>RfaH and the ops element, components of a novel system controlling bacterial transcription elongation.</title>
        <authorList>
            <person name="Bailey M.J."/>
            <person name="Hughes C."/>
            <person name="Koronakis V."/>
        </authorList>
    </citation>
    <scope>FUNCTION</scope>
</reference>
<reference key="10">
    <citation type="journal article" date="2000" name="Mol. Gen. Genet.">
        <title>In vitro recruitment of the RfaH regulatory protein into a specialised transcription complex, directed by the nucleic acid ops element.</title>
        <authorList>
            <person name="Bailey M.J."/>
            <person name="Hughes C."/>
            <person name="Koronakis V."/>
        </authorList>
    </citation>
    <scope>FUNCTION</scope>
</reference>
<reference key="11">
    <citation type="journal article" date="2002" name="Cell">
        <title>The transcriptional regulator RfaH stimulates RNA chain synthesis after recruitment to elongation complexes by the exposed nontemplate DNA strand.</title>
        <authorList>
            <person name="Artsimovitch I."/>
            <person name="Landick R."/>
        </authorList>
    </citation>
    <scope>FUNCTION</scope>
    <scope>INTERACTION WITH DNA AND RNAP</scope>
</reference>
<reference key="12">
    <citation type="journal article" date="2002" name="Mol. Cell">
        <title>RfaH, a bacterial transcription antiterminator.</title>
        <authorList>
            <person name="Santangelo T.J."/>
            <person name="Roberts J.W."/>
        </authorList>
    </citation>
    <scope>FUNCTION</scope>
</reference>
<reference key="13">
    <citation type="journal article" date="2006" name="J. Bacteriol.">
        <title>The transcriptional antiterminator RfaH represses biofilm formation in Escherichia coli.</title>
        <authorList>
            <person name="Beloin C."/>
            <person name="Michaelis K."/>
            <person name="Lindner K."/>
            <person name="Landini P."/>
            <person name="Hacker J."/>
            <person name="Ghigo J.M."/>
            <person name="Dobrindt U."/>
        </authorList>
    </citation>
    <scope>FUNCTION IN BIOFILM FORMATION</scope>
    <scope>DISRUPTION PHENOTYPE</scope>
    <source>
        <strain>K12 / MG1655 / ATCC 47076</strain>
    </source>
</reference>
<reference key="14">
    <citation type="journal article" date="2007" name="Mol. Cell">
        <title>Structural basis for converting a general transcription factor into an operon-specific virulence regulator.</title>
        <authorList>
            <person name="Belogurov G.A."/>
            <person name="Vassylyeva M.N."/>
            <person name="Svetlov V."/>
            <person name="Klyuyev S."/>
            <person name="Grishin N.V."/>
            <person name="Vassylyev D.G."/>
            <person name="Artsimovitch I."/>
        </authorList>
    </citation>
    <scope>X-RAY CRYSTALLOGRAPHY (2.1 ANGSTROMS)</scope>
    <scope>SUBUNIT</scope>
    <scope>DOMAIN</scope>
</reference>
<sequence>MQSWYLLYCKRGQLQRAQEHLERQAVNCLAPMITLEKIVRGKRTAVSEPLFPNYLFVEFDPEVIHTTTINATRGVSHFVRFGASPAIVPSAVIHQLSVYKPKDIVDPATPYPGDKVIITEGAFEGFQAIFTEPDGEARSMLLLNLINKEIKHSVKNTEFRKL</sequence>
<name>RFAH_ECOLI</name>
<feature type="chain" id="PRO_0000097281" description="Transcription antitermination protein RfaH">
    <location>
        <begin position="1"/>
        <end position="162"/>
    </location>
</feature>
<feature type="strand" evidence="13">
    <location>
        <begin position="3"/>
        <end position="9"/>
    </location>
</feature>
<feature type="turn" evidence="13">
    <location>
        <begin position="11"/>
        <end position="13"/>
    </location>
</feature>
<feature type="helix" evidence="13">
    <location>
        <begin position="14"/>
        <end position="23"/>
    </location>
</feature>
<feature type="strand" evidence="13">
    <location>
        <begin position="27"/>
        <end position="29"/>
    </location>
</feature>
<feature type="strand" evidence="13">
    <location>
        <begin position="32"/>
        <end position="51"/>
    </location>
</feature>
<feature type="strand" evidence="13">
    <location>
        <begin position="54"/>
        <end position="59"/>
    </location>
</feature>
<feature type="turn" evidence="13">
    <location>
        <begin position="61"/>
        <end position="63"/>
    </location>
</feature>
<feature type="helix" evidence="13">
    <location>
        <begin position="66"/>
        <end position="71"/>
    </location>
</feature>
<feature type="strand" evidence="13">
    <location>
        <begin position="75"/>
        <end position="78"/>
    </location>
</feature>
<feature type="strand" evidence="13">
    <location>
        <begin position="81"/>
        <end position="85"/>
    </location>
</feature>
<feature type="helix" evidence="13">
    <location>
        <begin position="91"/>
        <end position="98"/>
    </location>
</feature>
<feature type="strand" evidence="12">
    <location>
        <begin position="102"/>
        <end position="105"/>
    </location>
</feature>
<feature type="helix" evidence="13">
    <location>
        <begin position="118"/>
        <end position="129"/>
    </location>
</feature>
<feature type="helix" evidence="13">
    <location>
        <begin position="135"/>
        <end position="155"/>
    </location>
</feature>
<feature type="turn" evidence="12">
    <location>
        <begin position="156"/>
        <end position="158"/>
    </location>
</feature>
<feature type="strand" evidence="12">
    <location>
        <begin position="159"/>
        <end position="161"/>
    </location>
</feature>
<gene>
    <name evidence="1" type="primary">rfaH</name>
    <name type="synonym">hlyT</name>
    <name type="synonym">sfrB</name>
    <name type="ordered locus">b3842</name>
    <name type="ordered locus">JW3818</name>
</gene>
<proteinExistence type="evidence at protein level"/>
<comment type="function">
    <text evidence="1 2 3 4 5 6 8 9 10 11">Enhances distal genes transcription elongation in a specialized subset of operons that encode extracytoplasmic components. RfaH is recruited into a multi-component RNA polymerase complex by the ops element, which is a short conserved DNA sequence located downstream of the main promoter of these operons. Once bound, RfaH suppresses pausing and inhibits Rho-dependent and intrinsic termination at a subset of sites. Termination signals are bypassed, which allows complete synthesis of long RNA chains. Enhances expression of several operons involved in synthesis of lipopolysaccharides, exopolysaccharides, hemolysin, and sex factor. Also negatively controls expression and surface presentation of AG43 and possibly another AG43-independent factor that mediates cell-cell interactions and biofilm formation.</text>
</comment>
<comment type="subunit">
    <text evidence="1 4 7">Interacts with both the nontemplate DNA and the RNA polymerase (RNAP). Monomer in solution.</text>
</comment>
<comment type="domain">
    <text evidence="7">The N-terminal domain contains a vast hydrophobic cavity that is buried by the C-terminal domain. This cavity may bind the RNAP and become unmasked only upon binding to the nontemplate DNA strand.</text>
</comment>
<comment type="disruption phenotype">
    <text evidence="6">Inactivation results in increased initial adhesion and biofilm formation.</text>
</comment>
<comment type="similarity">
    <text evidence="1">Belongs to the RfaH family.</text>
</comment>
<keyword id="KW-0002">3D-structure</keyword>
<keyword id="KW-0238">DNA-binding</keyword>
<keyword id="KW-1185">Reference proteome</keyword>
<keyword id="KW-0804">Transcription</keyword>
<keyword id="KW-0889">Transcription antitermination</keyword>
<keyword id="KW-0805">Transcription regulation</keyword>